<accession>A0PVM7</accession>
<name>Y4402_MYCUA</name>
<keyword id="KW-0489">Methyltransferase</keyword>
<keyword id="KW-0949">S-adenosyl-L-methionine</keyword>
<keyword id="KW-0808">Transferase</keyword>
<feature type="chain" id="PRO_0000361247" description="Putative S-adenosyl-L-methionine-dependent methyltransferase MUL_4402">
    <location>
        <begin position="1"/>
        <end position="314"/>
    </location>
</feature>
<feature type="region of interest" description="Disordered" evidence="2">
    <location>
        <begin position="291"/>
        <end position="314"/>
    </location>
</feature>
<feature type="binding site" evidence="1">
    <location>
        <position position="132"/>
    </location>
    <ligand>
        <name>S-adenosyl-L-methionine</name>
        <dbReference type="ChEBI" id="CHEBI:59789"/>
    </ligand>
</feature>
<feature type="binding site" evidence="1">
    <location>
        <begin position="161"/>
        <end position="162"/>
    </location>
    <ligand>
        <name>S-adenosyl-L-methionine</name>
        <dbReference type="ChEBI" id="CHEBI:59789"/>
    </ligand>
</feature>
<sequence>MPRTDNDSWTITESVGATALGVAAARAAETESENPLIEDPFARVFVDAAGDGMWSMFANPALLAGAPEIESQVGARVRQMIDFMATRTAFFDEFFLGAADAGVRQVVILASGLDSRAWRLPWPDGTVVYELDQPRVLEFKSATLRQHGARPTAQLMNIPIDLRQDWPAALLDSGFDASKPTAWSAEGLVRYLPARAQDLLFERIDTLSPAGSWLATNVPQGGFLDPDLVRRQHEEMQRMRAAAGRLVEIQMPAVEDLWYAEERTPVADWLGEHGWRASATTSAELLTRYGRPVPDDAEGPVPPTLFVSAHRPAA</sequence>
<comment type="function">
    <text evidence="1">Exhibits S-adenosyl-L-methionine-dependent methyltransferase activity.</text>
</comment>
<comment type="similarity">
    <text evidence="3">Belongs to the UPF0677 family.</text>
</comment>
<gene>
    <name type="ordered locus">MUL_4402</name>
</gene>
<organism>
    <name type="scientific">Mycobacterium ulcerans (strain Agy99)</name>
    <dbReference type="NCBI Taxonomy" id="362242"/>
    <lineage>
        <taxon>Bacteria</taxon>
        <taxon>Bacillati</taxon>
        <taxon>Actinomycetota</taxon>
        <taxon>Actinomycetes</taxon>
        <taxon>Mycobacteriales</taxon>
        <taxon>Mycobacteriaceae</taxon>
        <taxon>Mycobacterium</taxon>
        <taxon>Mycobacterium ulcerans group</taxon>
    </lineage>
</organism>
<evidence type="ECO:0000250" key="1"/>
<evidence type="ECO:0000256" key="2">
    <source>
        <dbReference type="SAM" id="MobiDB-lite"/>
    </source>
</evidence>
<evidence type="ECO:0000305" key="3"/>
<protein>
    <recommendedName>
        <fullName>Putative S-adenosyl-L-methionine-dependent methyltransferase MUL_4402</fullName>
        <ecNumber>2.1.1.-</ecNumber>
    </recommendedName>
</protein>
<proteinExistence type="inferred from homology"/>
<dbReference type="EC" id="2.1.1.-"/>
<dbReference type="EMBL" id="CP000325">
    <property type="protein sequence ID" value="ABL06396.1"/>
    <property type="molecule type" value="Genomic_DNA"/>
</dbReference>
<dbReference type="RefSeq" id="WP_011741997.1">
    <property type="nucleotide sequence ID" value="NC_008611.1"/>
</dbReference>
<dbReference type="SMR" id="A0PVM7"/>
<dbReference type="KEGG" id="mul:MUL_4402"/>
<dbReference type="eggNOG" id="COG3315">
    <property type="taxonomic scope" value="Bacteria"/>
</dbReference>
<dbReference type="HOGENOM" id="CLU_056160_2_1_11"/>
<dbReference type="Proteomes" id="UP000000765">
    <property type="component" value="Chromosome"/>
</dbReference>
<dbReference type="GO" id="GO:0008168">
    <property type="term" value="F:methyltransferase activity"/>
    <property type="evidence" value="ECO:0007669"/>
    <property type="project" value="UniProtKB-KW"/>
</dbReference>
<dbReference type="GO" id="GO:0032259">
    <property type="term" value="P:methylation"/>
    <property type="evidence" value="ECO:0007669"/>
    <property type="project" value="UniProtKB-KW"/>
</dbReference>
<dbReference type="FunFam" id="3.40.50.150:FF:000152">
    <property type="entry name" value="S-adenosyl-L-methionine-dependent methyltransferase"/>
    <property type="match status" value="1"/>
</dbReference>
<dbReference type="Gene3D" id="3.40.50.150">
    <property type="entry name" value="Vaccinia Virus protein VP39"/>
    <property type="match status" value="1"/>
</dbReference>
<dbReference type="InterPro" id="IPR007213">
    <property type="entry name" value="Ppm1/Ppm2/Tcmp"/>
</dbReference>
<dbReference type="InterPro" id="IPR029063">
    <property type="entry name" value="SAM-dependent_MTases_sf"/>
</dbReference>
<dbReference type="InterPro" id="IPR011610">
    <property type="entry name" value="SAM_mthyl_Trfase_ML2640-like"/>
</dbReference>
<dbReference type="NCBIfam" id="TIGR00027">
    <property type="entry name" value="mthyl_TIGR00027"/>
    <property type="match status" value="1"/>
</dbReference>
<dbReference type="PANTHER" id="PTHR43619">
    <property type="entry name" value="S-ADENOSYL-L-METHIONINE-DEPENDENT METHYLTRANSFERASE YKTD-RELATED"/>
    <property type="match status" value="1"/>
</dbReference>
<dbReference type="PANTHER" id="PTHR43619:SF2">
    <property type="entry name" value="S-ADENOSYL-L-METHIONINE-DEPENDENT METHYLTRANSFERASES SUPERFAMILY PROTEIN"/>
    <property type="match status" value="1"/>
</dbReference>
<dbReference type="Pfam" id="PF04072">
    <property type="entry name" value="LCM"/>
    <property type="match status" value="1"/>
</dbReference>
<dbReference type="SUPFAM" id="SSF53335">
    <property type="entry name" value="S-adenosyl-L-methionine-dependent methyltransferases"/>
    <property type="match status" value="1"/>
</dbReference>
<reference key="1">
    <citation type="journal article" date="2007" name="Genome Res.">
        <title>Reductive evolution and niche adaptation inferred from the genome of Mycobacterium ulcerans, the causative agent of Buruli ulcer.</title>
        <authorList>
            <person name="Stinear T.P."/>
            <person name="Seemann T."/>
            <person name="Pidot S."/>
            <person name="Frigui W."/>
            <person name="Reysset G."/>
            <person name="Garnier T."/>
            <person name="Meurice G."/>
            <person name="Simon D."/>
            <person name="Bouchier C."/>
            <person name="Ma L."/>
            <person name="Tichit M."/>
            <person name="Porter J.L."/>
            <person name="Ryan J."/>
            <person name="Johnson P.D.R."/>
            <person name="Davies J.K."/>
            <person name="Jenkin G.A."/>
            <person name="Small P.L.C."/>
            <person name="Jones L.M."/>
            <person name="Tekaia F."/>
            <person name="Laval F."/>
            <person name="Daffe M."/>
            <person name="Parkhill J."/>
            <person name="Cole S.T."/>
        </authorList>
    </citation>
    <scope>NUCLEOTIDE SEQUENCE [LARGE SCALE GENOMIC DNA]</scope>
    <source>
        <strain>Agy99</strain>
    </source>
</reference>